<reference key="1">
    <citation type="journal article" date="1993" name="Gene">
        <title>Analysis of the stabilization system of pSM19035-derived plasmid pBT233 in Bacillus subtilis.</title>
        <authorList>
            <person name="Ceglowski P."/>
            <person name="Boitsov A."/>
            <person name="Chai S."/>
            <person name="Alonso J.C."/>
        </authorList>
    </citation>
    <scope>NUCLEOTIDE SEQUENCE [GENOMIC DNA]</scope>
    <source>
        <plasmid>pBT233</plasmid>
    </source>
</reference>
<reference key="2">
    <citation type="journal article" date="1994" name="Gene">
        <title>Gene organization of the Streptococcus pyogenes plasmid pDB101: sequence analysis of the orf eta-copS region.</title>
        <authorList>
            <person name="Ceglowski P."/>
            <person name="Alonso J.C."/>
        </authorList>
    </citation>
    <scope>NUCLEOTIDE SEQUENCE [GENOMIC DNA]</scope>
    <source>
        <plasmid>pSM19035</plasmid>
    </source>
</reference>
<reference key="3">
    <citation type="submission" date="2003-07" db="EMBL/GenBank/DDBJ databases">
        <title>Nucleotide sequence of the small EcoRI fragment of Streptococcus pyogenes plasmid pSM19035.</title>
        <authorList>
            <person name="Kern-Zdanowicz I."/>
            <person name="Zienkiewicz M."/>
            <person name="Ceglowski P."/>
        </authorList>
    </citation>
    <scope>NUCLEOTIDE SEQUENCE [GENOMIC DNA]</scope>
    <source>
        <plasmid>pSM19035</plasmid>
    </source>
</reference>
<reference key="4">
    <citation type="journal article" date="2002" name="Biol. Chem.">
        <title>In vitro and in vivo stability of the epsilon2zeta2 protein complex of the broad host-range Streptococcus pyogenes pSM19035 addiction system.</title>
        <authorList>
            <person name="Camacho A.G."/>
            <person name="Misselwitz R."/>
            <person name="Behlke J."/>
            <person name="Ayora S."/>
            <person name="Welfle K."/>
            <person name="Meinhart A."/>
            <person name="Lara B."/>
            <person name="Saenger W."/>
            <person name="Welfle H."/>
            <person name="Alonso J.C."/>
        </authorList>
    </citation>
    <scope>PROTEIN SEQUENCE OF 2-10</scope>
    <scope>CHARACTERIZATION</scope>
    <source>
        <plasmid>pSM19035</plasmid>
    </source>
</reference>
<reference key="5">
    <citation type="journal article" date="2001" name="Acta Crystallogr. D">
        <title>Crystallization and preliminary X-ray diffraction studies of the epsilon zeta addiction system encoded by Streptococcus pyogenes plasmid pSM19035.</title>
        <authorList>
            <person name="Meinhart A."/>
            <person name="Alings C."/>
            <person name="Straeter N."/>
            <person name="Camacho A.G."/>
            <person name="Alonso J.C."/>
            <person name="Saenger W."/>
        </authorList>
    </citation>
    <scope>CRYSTALLIZATION</scope>
    <source>
        <plasmid>pSM19035</plasmid>
    </source>
</reference>
<reference key="6">
    <citation type="journal article" date="2003" name="Proc. Natl. Acad. Sci. U.S.A.">
        <title>Crystal structure of the plasmid maintenance system epsilon/zeta: Functional mechanism of toxin zeta and inactivation by epsilon2zeta2 complex formation.</title>
        <authorList>
            <person name="Meinhart A."/>
            <person name="Alonso J.C."/>
            <person name="Straeter N."/>
            <person name="Saenger W."/>
        </authorList>
    </citation>
    <scope>X-RAY CRYSTALLOGRAPHY (1.95 ANGSTROMS)</scope>
    <source>
        <plasmid>pSM19035</plasmid>
    </source>
</reference>
<reference key="7">
    <citation type="journal article" date="2011" name="PLoS Biol.">
        <title>A novel mechanism of programmed cell death in bacteria by toxin-antitoxin systems corrupts peptidoglycan synthesis.</title>
        <authorList>
            <person name="Mutschler H."/>
            <person name="Gebhardt M."/>
            <person name="Shoeman R.L."/>
            <person name="Meinhart A."/>
        </authorList>
    </citation>
    <scope>X-RAY CRYSTALLOGRAPHY (2.7 ANGSTROMS) IN COMPLEX WITH ZETA TOXIN AND UNAG</scope>
    <scope>EXPRESSION IN E.COLI</scope>
    <scope>FUNCTION AS AN ANTITOXIN</scope>
    <source>
        <plasmid>pSM19035</plasmid>
    </source>
</reference>
<dbReference type="EMBL" id="X64695">
    <property type="protein sequence ID" value="CAA45933.1"/>
    <property type="molecule type" value="Genomic_DNA"/>
</dbReference>
<dbReference type="EMBL" id="AY357120">
    <property type="protein sequence ID" value="AAR27198.1"/>
    <property type="molecule type" value="Genomic_DNA"/>
</dbReference>
<dbReference type="EMBL" id="X66468">
    <property type="protein sequence ID" value="CAA47089.1"/>
    <property type="molecule type" value="Genomic_DNA"/>
</dbReference>
<dbReference type="EMBL" id="X66468">
    <property type="protein sequence ID" value="CAA47090.1"/>
    <property type="molecule type" value="Genomic_DNA"/>
</dbReference>
<dbReference type="EMBL" id="AY357120">
    <property type="protein sequence ID" value="AAR27201.1"/>
    <property type="molecule type" value="Genomic_DNA"/>
</dbReference>
<dbReference type="PIR" id="S45083">
    <property type="entry name" value="S45083"/>
</dbReference>
<dbReference type="RefSeq" id="WP_000301765.1">
    <property type="nucleotide sequence ID" value="NZ_WXZG01000017.1"/>
</dbReference>
<dbReference type="RefSeq" id="YP_232737.1">
    <property type="nucleotide sequence ID" value="NC_006978.1"/>
</dbReference>
<dbReference type="RefSeq" id="YP_232742.1">
    <property type="nucleotide sequence ID" value="NC_006978.1"/>
</dbReference>
<dbReference type="RefSeq" id="YP_232758.1">
    <property type="nucleotide sequence ID" value="NC_006979.1"/>
</dbReference>
<dbReference type="RefSeq" id="YP_232763.1">
    <property type="nucleotide sequence ID" value="NC_006979.1"/>
</dbReference>
<dbReference type="PDB" id="1GVN">
    <property type="method" value="X-ray"/>
    <property type="resolution" value="1.95 A"/>
    <property type="chains" value="A/C=1-90"/>
</dbReference>
<dbReference type="PDB" id="3Q8X">
    <property type="method" value="X-ray"/>
    <property type="resolution" value="2.70 A"/>
    <property type="chains" value="A/C=1-90"/>
</dbReference>
<dbReference type="PDBsum" id="1GVN"/>
<dbReference type="PDBsum" id="3Q8X"/>
<dbReference type="SMR" id="Q57231"/>
<dbReference type="DIP" id="DIP-58968N"/>
<dbReference type="IntAct" id="Q57231">
    <property type="interactions" value="1"/>
</dbReference>
<dbReference type="GeneID" id="93102847"/>
<dbReference type="EvolutionaryTrace" id="Q57231"/>
<dbReference type="GO" id="GO:0015643">
    <property type="term" value="F:toxic substance binding"/>
    <property type="evidence" value="ECO:0007669"/>
    <property type="project" value="InterPro"/>
</dbReference>
<dbReference type="GO" id="GO:0031342">
    <property type="term" value="P:negative regulation of cell killing"/>
    <property type="evidence" value="ECO:0007669"/>
    <property type="project" value="InterPro"/>
</dbReference>
<dbReference type="GO" id="GO:0009636">
    <property type="term" value="P:response to toxic substance"/>
    <property type="evidence" value="ECO:0007669"/>
    <property type="project" value="InterPro"/>
</dbReference>
<dbReference type="Gene3D" id="1.10.8.130">
    <property type="match status" value="1"/>
</dbReference>
<dbReference type="InterPro" id="IPR035569">
    <property type="entry name" value="Antitoxin_epsilon/PezA_dom_sf"/>
</dbReference>
<dbReference type="InterPro" id="IPR015090">
    <property type="entry name" value="Epsilon_PezA_dom"/>
</dbReference>
<dbReference type="Pfam" id="PF08998">
    <property type="entry name" value="Epsilon_antitox"/>
    <property type="match status" value="1"/>
</dbReference>
<dbReference type="SUPFAM" id="SSF81710">
    <property type="entry name" value="Plasmid maintenance system epsilon/zeta, antidote epsilon subunit"/>
    <property type="match status" value="1"/>
</dbReference>
<geneLocation type="plasmid">
    <name>pBT233</name>
</geneLocation>
<geneLocation type="plasmid">
    <name>pSM19035</name>
</geneLocation>
<protein>
    <recommendedName>
        <fullName>Antitoxin epsilon</fullName>
    </recommendedName>
</protein>
<organism>
    <name type="scientific">Streptococcus pyogenes</name>
    <dbReference type="NCBI Taxonomy" id="1314"/>
    <lineage>
        <taxon>Bacteria</taxon>
        <taxon>Bacillati</taxon>
        <taxon>Bacillota</taxon>
        <taxon>Bacilli</taxon>
        <taxon>Lactobacillales</taxon>
        <taxon>Streptococcaceae</taxon>
        <taxon>Streptococcus</taxon>
    </lineage>
</organism>
<evidence type="ECO:0000269" key="1">
    <source>
    </source>
</evidence>
<evidence type="ECO:0000269" key="2">
    <source ref="7"/>
</evidence>
<evidence type="ECO:0000305" key="3"/>
<evidence type="ECO:0007829" key="4">
    <source>
        <dbReference type="PDB" id="1GVN"/>
    </source>
</evidence>
<comment type="function">
    <text evidence="2">Antitoxin component of a type II toxin-antitoxin (TA) system. Neutralizes the toxic effect of cognate zeta toxin. Part of a postsegregational killing (PSK) system involved in the killing of plasmid-free cells. Continuous synthesis of the epsilon antitoxin is required to counteract the zeta toxin.</text>
</comment>
<comment type="subunit">
    <text evidence="2">In the presence of the zeta toxin, forms an inactive PezA(2)PezT(2) heterotetramer. The heterotetramer is still able to bind the zeta toxin substrate UNAG.</text>
</comment>
<comment type="interaction">
    <interactant intactId="EBI-6407271">
        <id>Q57231</id>
    </interactant>
    <interactant intactId="EBI-6407265">
        <id>Q54944</id>
    </interactant>
    <organismsDiffer>false</organismsDiffer>
    <experiments>4</experiments>
</comment>
<comment type="miscellaneous">
    <text>Has a short half-life in vivo.</text>
</comment>
<comment type="similarity">
    <text evidence="3">Belongs to the epsilon antitoxin family.</text>
</comment>
<feature type="initiator methionine" description="Removed" evidence="1">
    <location>
        <position position="1"/>
    </location>
</feature>
<feature type="chain" id="PRO_0000221550" description="Antitoxin epsilon">
    <location>
        <begin position="2"/>
        <end position="90"/>
    </location>
</feature>
<feature type="helix" evidence="4">
    <location>
        <begin position="5"/>
        <end position="31"/>
    </location>
</feature>
<feature type="helix" evidence="4">
    <location>
        <begin position="42"/>
        <end position="54"/>
    </location>
</feature>
<feature type="helix" evidence="4">
    <location>
        <begin position="58"/>
        <end position="60"/>
    </location>
</feature>
<feature type="helix" evidence="4">
    <location>
        <begin position="63"/>
        <end position="83"/>
    </location>
</feature>
<sequence>MAVTYEKTFEIEIINELSASVYNRVLNYVLNHELNKNDSQLLEVNLLNQLKLAKRVNLFDYSLEELQAVHEYWRSMNRYSKQVLNKEKVA</sequence>
<keyword id="KW-0002">3D-structure</keyword>
<keyword id="KW-0903">Direct protein sequencing</keyword>
<keyword id="KW-0614">Plasmid</keyword>
<keyword id="KW-1277">Toxin-antitoxin system</keyword>
<accession>Q57231</accession>
<accession>Q6UZC8</accession>
<proteinExistence type="evidence at protein level"/>
<name>EATX_STRPY</name>